<accession>Q09453</accession>
<reference key="1">
    <citation type="journal article" date="1998" name="Science">
        <title>Genome sequence of the nematode C. elegans: a platform for investigating biology.</title>
        <authorList>
            <consortium name="The C. elegans sequencing consortium"/>
        </authorList>
    </citation>
    <scope>NUCLEOTIDE SEQUENCE [LARGE SCALE GENOMIC DNA]</scope>
    <source>
        <strain>Bristol N2</strain>
    </source>
</reference>
<dbReference type="EMBL" id="Z46791">
    <property type="protein sequence ID" value="CAA86760.2"/>
    <property type="molecule type" value="Genomic_DNA"/>
</dbReference>
<dbReference type="PIR" id="T19145">
    <property type="entry name" value="T19145"/>
</dbReference>
<dbReference type="SMR" id="Q09453"/>
<dbReference type="FunCoup" id="Q09453">
    <property type="interactions" value="77"/>
</dbReference>
<dbReference type="STRING" id="6239.C09G5.1.1"/>
<dbReference type="GlyCosmos" id="Q09453">
    <property type="glycosylation" value="3 sites, No reported glycans"/>
</dbReference>
<dbReference type="PaxDb" id="6239-C09G5.1"/>
<dbReference type="EnsemblMetazoa" id="C09G5.1.1">
    <property type="protein sequence ID" value="C09G5.1.1"/>
    <property type="gene ID" value="WBGene00001586"/>
</dbReference>
<dbReference type="KEGG" id="cel:CELE_C09G5.1"/>
<dbReference type="UCSC" id="C09G5.1">
    <property type="organism name" value="c. elegans"/>
</dbReference>
<dbReference type="AGR" id="WB:WBGene00001586"/>
<dbReference type="CTD" id="191636"/>
<dbReference type="WormBase" id="C09G5.1">
    <property type="protein sequence ID" value="CE36915"/>
    <property type="gene ID" value="WBGene00001586"/>
    <property type="gene designation" value="lgc-57"/>
</dbReference>
<dbReference type="eggNOG" id="KOG3644">
    <property type="taxonomic scope" value="Eukaryota"/>
</dbReference>
<dbReference type="HOGENOM" id="CLU_010920_0_1_1"/>
<dbReference type="InParanoid" id="Q09453"/>
<dbReference type="OMA" id="YAYDEEQ"/>
<dbReference type="OrthoDB" id="442503at2759"/>
<dbReference type="PhylomeDB" id="Q09453"/>
<dbReference type="Reactome" id="R-CEL-112314">
    <property type="pathway name" value="Neurotransmitter receptors and postsynaptic signal transmission"/>
</dbReference>
<dbReference type="PRO" id="PR:Q09453"/>
<dbReference type="Proteomes" id="UP000001940">
    <property type="component" value="Chromosome II"/>
</dbReference>
<dbReference type="Bgee" id="WBGene00001586">
    <property type="expression patterns" value="Expressed in larva and 3 other cell types or tissues"/>
</dbReference>
<dbReference type="GO" id="GO:0034707">
    <property type="term" value="C:chloride channel complex"/>
    <property type="evidence" value="ECO:0007669"/>
    <property type="project" value="UniProtKB-KW"/>
</dbReference>
<dbReference type="GO" id="GO:0045211">
    <property type="term" value="C:postsynaptic membrane"/>
    <property type="evidence" value="ECO:0007669"/>
    <property type="project" value="UniProtKB-SubCell"/>
</dbReference>
<dbReference type="GO" id="GO:0005254">
    <property type="term" value="F:chloride channel activity"/>
    <property type="evidence" value="ECO:0007669"/>
    <property type="project" value="UniProtKB-KW"/>
</dbReference>
<dbReference type="GO" id="GO:0005230">
    <property type="term" value="F:extracellular ligand-gated monoatomic ion channel activity"/>
    <property type="evidence" value="ECO:0007669"/>
    <property type="project" value="InterPro"/>
</dbReference>
<dbReference type="GO" id="GO:0004888">
    <property type="term" value="F:transmembrane signaling receptor activity"/>
    <property type="evidence" value="ECO:0007669"/>
    <property type="project" value="InterPro"/>
</dbReference>
<dbReference type="GO" id="GO:1902476">
    <property type="term" value="P:chloride transmembrane transport"/>
    <property type="evidence" value="ECO:0000318"/>
    <property type="project" value="GO_Central"/>
</dbReference>
<dbReference type="CDD" id="cd18987">
    <property type="entry name" value="LGIC_ECD_anion"/>
    <property type="match status" value="1"/>
</dbReference>
<dbReference type="CDD" id="cd19049">
    <property type="entry name" value="LGIC_TM_anion"/>
    <property type="match status" value="1"/>
</dbReference>
<dbReference type="FunFam" id="2.70.170.10:FF:000039">
    <property type="entry name" value="Ligand-Gated ion Channel"/>
    <property type="match status" value="1"/>
</dbReference>
<dbReference type="Gene3D" id="2.70.170.10">
    <property type="entry name" value="Neurotransmitter-gated ion-channel ligand-binding domain"/>
    <property type="match status" value="1"/>
</dbReference>
<dbReference type="Gene3D" id="1.20.58.390">
    <property type="entry name" value="Neurotransmitter-gated ion-channel transmembrane domain"/>
    <property type="match status" value="1"/>
</dbReference>
<dbReference type="InterPro" id="IPR006028">
    <property type="entry name" value="GABAA/Glycine_rcpt"/>
</dbReference>
<dbReference type="InterPro" id="IPR006202">
    <property type="entry name" value="Neur_chan_lig-bd"/>
</dbReference>
<dbReference type="InterPro" id="IPR036734">
    <property type="entry name" value="Neur_chan_lig-bd_sf"/>
</dbReference>
<dbReference type="InterPro" id="IPR006201">
    <property type="entry name" value="Neur_channel"/>
</dbReference>
<dbReference type="InterPro" id="IPR036719">
    <property type="entry name" value="Neuro-gated_channel_TM_sf"/>
</dbReference>
<dbReference type="InterPro" id="IPR038050">
    <property type="entry name" value="Neuro_actylchol_rec"/>
</dbReference>
<dbReference type="InterPro" id="IPR006029">
    <property type="entry name" value="Neurotrans-gated_channel_TM"/>
</dbReference>
<dbReference type="InterPro" id="IPR018000">
    <property type="entry name" value="Neurotransmitter_ion_chnl_CS"/>
</dbReference>
<dbReference type="NCBIfam" id="TIGR00860">
    <property type="entry name" value="LIC"/>
    <property type="match status" value="1"/>
</dbReference>
<dbReference type="PANTHER" id="PTHR18945">
    <property type="entry name" value="NEUROTRANSMITTER GATED ION CHANNEL"/>
    <property type="match status" value="1"/>
</dbReference>
<dbReference type="Pfam" id="PF02931">
    <property type="entry name" value="Neur_chan_LBD"/>
    <property type="match status" value="1"/>
</dbReference>
<dbReference type="Pfam" id="PF02932">
    <property type="entry name" value="Neur_chan_memb"/>
    <property type="match status" value="1"/>
</dbReference>
<dbReference type="PRINTS" id="PR00253">
    <property type="entry name" value="GABAARECEPTR"/>
</dbReference>
<dbReference type="PRINTS" id="PR00252">
    <property type="entry name" value="NRIONCHANNEL"/>
</dbReference>
<dbReference type="SUPFAM" id="SSF90112">
    <property type="entry name" value="Neurotransmitter-gated ion-channel transmembrane pore"/>
    <property type="match status" value="1"/>
</dbReference>
<dbReference type="SUPFAM" id="SSF63712">
    <property type="entry name" value="Nicotinic receptor ligand binding domain-like"/>
    <property type="match status" value="1"/>
</dbReference>
<dbReference type="PROSITE" id="PS00236">
    <property type="entry name" value="NEUROTR_ION_CHANNEL"/>
    <property type="match status" value="1"/>
</dbReference>
<protein>
    <recommendedName>
        <fullName>Glycine receptor subunit beta-type 4</fullName>
    </recommendedName>
    <alternativeName>
        <fullName evidence="6">Ligand-gated ion channel 57</fullName>
    </alternativeName>
</protein>
<evidence type="ECO:0000250" key="1">
    <source>
        <dbReference type="UniProtKB" id="P23415"/>
    </source>
</evidence>
<evidence type="ECO:0000250" key="2">
    <source>
        <dbReference type="UniProtKB" id="P48167"/>
    </source>
</evidence>
<evidence type="ECO:0000250" key="3">
    <source>
        <dbReference type="UniProtKB" id="P48168"/>
    </source>
</evidence>
<evidence type="ECO:0000255" key="4"/>
<evidence type="ECO:0000305" key="5"/>
<evidence type="ECO:0000312" key="6">
    <source>
        <dbReference type="WormBase" id="C09G5.1"/>
    </source>
</evidence>
<comment type="function">
    <text evidence="3">Glycine receptors are ligand-gated chloride channels. Channel opening is triggered by extracellular glycine. Contributes to the generation of inhibitory postsynaptic currents.</text>
</comment>
<comment type="subunit">
    <text evidence="2">Pentamer.</text>
</comment>
<comment type="subcellular location">
    <subcellularLocation>
        <location evidence="3">Postsynaptic cell membrane</location>
        <topology evidence="2">Multi-pass membrane protein</topology>
    </subcellularLocation>
    <subcellularLocation>
        <location evidence="3">Synapse</location>
    </subcellularLocation>
    <subcellularLocation>
        <location evidence="3">Cell membrane</location>
        <topology evidence="1">Multi-pass membrane protein</topology>
    </subcellularLocation>
</comment>
<comment type="similarity">
    <text evidence="5">Belongs to the ligand-gated ion channel (TC 1.A.9) family. Glycine receptor (TC 1.A.9.3) subfamily.</text>
</comment>
<proteinExistence type="inferred from homology"/>
<gene>
    <name evidence="6" type="primary">lgc-57</name>
    <name type="synonym">gbr-4</name>
    <name type="ORF">C09G5.1/C09G5.9</name>
</gene>
<sequence>MHSLFLKILIYSLMQCVLGQAEFWDYDENVTQIEEDFKIDDVTRILKRVGNYNRNAYPLLDQDLATHVDIQMYIEGMSSFHAQSMDFQVDIYFQEKWVDHRLQHNNTKRILVKDPKLFGLLWHPDLYFANARTASFHDVTQPNFLVWIYPNGTVWYDCRISLTVLCMQDLARYPLDSQNCGLRILSYAYDEEQLIIRWNGGNPVEVNRGIRMPDMHLKHIKFYTKRDKYATGIWSSAVAEFHVDREITHHIIQSYIPTSLIVIISWFSFWLDVEAVPGRVSLSITTLLTLATQSSAARMALPQASDVKAIDVWMGTCMAFVFSAMIEFTVVNYCVRRKVRTKIKPRGLSEQVHDMVAQYREKKDKFNNGNCEISYEMALQPNEDNATVQRNFEKKEVREMNQASLFVRRSLLPTSKRKTIEDRINRVEENRKNAQKIDRYSRALFPLAFIIFNIFYWIYYLKYAGSNSPELLL</sequence>
<name>GLRB4_CAEEL</name>
<keyword id="KW-1003">Cell membrane</keyword>
<keyword id="KW-0868">Chloride</keyword>
<keyword id="KW-0869">Chloride channel</keyword>
<keyword id="KW-1015">Disulfide bond</keyword>
<keyword id="KW-0325">Glycoprotein</keyword>
<keyword id="KW-0407">Ion channel</keyword>
<keyword id="KW-0406">Ion transport</keyword>
<keyword id="KW-1071">Ligand-gated ion channel</keyword>
<keyword id="KW-0472">Membrane</keyword>
<keyword id="KW-0628">Postsynaptic cell membrane</keyword>
<keyword id="KW-0675">Receptor</keyword>
<keyword id="KW-1185">Reference proteome</keyword>
<keyword id="KW-0732">Signal</keyword>
<keyword id="KW-0770">Synapse</keyword>
<keyword id="KW-0812">Transmembrane</keyword>
<keyword id="KW-1133">Transmembrane helix</keyword>
<keyword id="KW-0813">Transport</keyword>
<feature type="signal peptide" evidence="4">
    <location>
        <begin position="1"/>
        <end position="19"/>
    </location>
</feature>
<feature type="chain" id="PRO_0000000426" description="Glycine receptor subunit beta-type 4">
    <location>
        <begin position="20"/>
        <end position="473"/>
    </location>
</feature>
<feature type="topological domain" description="Extracellular" evidence="1">
    <location>
        <begin position="20"/>
        <end position="249"/>
    </location>
</feature>
<feature type="transmembrane region" description="Helical; Name=1" evidence="1">
    <location>
        <begin position="250"/>
        <end position="271"/>
    </location>
</feature>
<feature type="topological domain" description="Cytoplasmic" evidence="1">
    <location>
        <begin position="272"/>
        <end position="276"/>
    </location>
</feature>
<feature type="transmembrane region" description="Helical; Name=2" evidence="1">
    <location>
        <begin position="277"/>
        <end position="297"/>
    </location>
</feature>
<feature type="topological domain" description="Extracellular" evidence="1">
    <location>
        <begin position="298"/>
        <end position="308"/>
    </location>
</feature>
<feature type="transmembrane region" description="Helical; Name=3" evidence="1">
    <location>
        <begin position="309"/>
        <end position="329"/>
    </location>
</feature>
<feature type="topological domain" description="Cytoplasmic" evidence="1">
    <location>
        <begin position="330"/>
        <end position="439"/>
    </location>
</feature>
<feature type="transmembrane region" description="Helical; Name=4" evidence="1">
    <location>
        <begin position="440"/>
        <end position="460"/>
    </location>
</feature>
<feature type="topological domain" description="Extracellular" evidence="1">
    <location>
        <begin position="461"/>
        <end position="473"/>
    </location>
</feature>
<feature type="glycosylation site" description="N-linked (GlcNAc...) asparagine" evidence="4">
    <location>
        <position position="29"/>
    </location>
</feature>
<feature type="glycosylation site" description="N-linked (GlcNAc...) asparagine" evidence="4">
    <location>
        <position position="105"/>
    </location>
</feature>
<feature type="glycosylation site" description="N-linked (GlcNAc...) asparagine" evidence="4">
    <location>
        <position position="151"/>
    </location>
</feature>
<feature type="disulfide bond" evidence="1">
    <location>
        <begin position="166"/>
        <end position="180"/>
    </location>
</feature>
<organism>
    <name type="scientific">Caenorhabditis elegans</name>
    <dbReference type="NCBI Taxonomy" id="6239"/>
    <lineage>
        <taxon>Eukaryota</taxon>
        <taxon>Metazoa</taxon>
        <taxon>Ecdysozoa</taxon>
        <taxon>Nematoda</taxon>
        <taxon>Chromadorea</taxon>
        <taxon>Rhabditida</taxon>
        <taxon>Rhabditina</taxon>
        <taxon>Rhabditomorpha</taxon>
        <taxon>Rhabditoidea</taxon>
        <taxon>Rhabditidae</taxon>
        <taxon>Peloderinae</taxon>
        <taxon>Caenorhabditis</taxon>
    </lineage>
</organism>